<name>NDUA6_PANTR</name>
<feature type="initiator methionine" description="Removed" evidence="2">
    <location>
        <position position="1"/>
    </location>
</feature>
<feature type="chain" id="PRO_0000251168" description="NADH dehydrogenase [ubiquinone] 1 alpha subcomplex subunit 6">
    <location>
        <begin position="2"/>
        <end position="128"/>
    </location>
</feature>
<feature type="modified residue" description="N-acetylalanine" evidence="2">
    <location>
        <position position="2"/>
    </location>
</feature>
<feature type="modified residue" description="Phosphoserine" evidence="1">
    <location>
        <position position="11"/>
    </location>
</feature>
<dbReference type="EMBL" id="DQ885729">
    <property type="protein sequence ID" value="ABH12238.1"/>
    <property type="molecule type" value="mRNA"/>
</dbReference>
<dbReference type="RefSeq" id="NP_001065259.1">
    <property type="nucleotide sequence ID" value="NM_001071791.1"/>
</dbReference>
<dbReference type="SMR" id="Q0MQA5"/>
<dbReference type="FunCoup" id="Q0MQA5">
    <property type="interactions" value="1228"/>
</dbReference>
<dbReference type="STRING" id="9598.ENSPTRP00000058761"/>
<dbReference type="PaxDb" id="9598-ENSPTRP00000058761"/>
<dbReference type="GeneID" id="458981"/>
<dbReference type="KEGG" id="ptr:458981"/>
<dbReference type="CTD" id="4700"/>
<dbReference type="eggNOG" id="KOG3426">
    <property type="taxonomic scope" value="Eukaryota"/>
</dbReference>
<dbReference type="HOGENOM" id="CLU_111660_3_0_1"/>
<dbReference type="InParanoid" id="Q0MQA5"/>
<dbReference type="OrthoDB" id="1171at9604"/>
<dbReference type="TreeFam" id="TF105625"/>
<dbReference type="Proteomes" id="UP000002277">
    <property type="component" value="Unplaced"/>
</dbReference>
<dbReference type="GO" id="GO:0005743">
    <property type="term" value="C:mitochondrial inner membrane"/>
    <property type="evidence" value="ECO:0007669"/>
    <property type="project" value="UniProtKB-SubCell"/>
</dbReference>
<dbReference type="GO" id="GO:0045271">
    <property type="term" value="C:respiratory chain complex I"/>
    <property type="evidence" value="ECO:0000250"/>
    <property type="project" value="UniProtKB"/>
</dbReference>
<dbReference type="GO" id="GO:0032981">
    <property type="term" value="P:mitochondrial respiratory chain complex I assembly"/>
    <property type="evidence" value="ECO:0000250"/>
    <property type="project" value="UniProtKB"/>
</dbReference>
<dbReference type="CDD" id="cd20266">
    <property type="entry name" value="Complex1_LYR_NDUFA6_LYRM6"/>
    <property type="match status" value="1"/>
</dbReference>
<dbReference type="InterPro" id="IPR045299">
    <property type="entry name" value="Complex1_LYR_NDUFA6_LYRM6"/>
</dbReference>
<dbReference type="InterPro" id="IPR016488">
    <property type="entry name" value="NADH_Ub_cplx-1_asu_su-6"/>
</dbReference>
<dbReference type="PANTHER" id="PTHR12964:SF0">
    <property type="entry name" value="NADH DEHYDROGENASE [UBIQUINONE] 1 ALPHA SUBCOMPLEX SUBUNIT 6"/>
    <property type="match status" value="1"/>
</dbReference>
<dbReference type="PANTHER" id="PTHR12964">
    <property type="entry name" value="NADH-UBIQUINONE OXIDOREDUCTASE B14 SUBUNIT"/>
    <property type="match status" value="1"/>
</dbReference>
<dbReference type="Pfam" id="PF13233">
    <property type="entry name" value="Complex1_LYR_2"/>
    <property type="match status" value="1"/>
</dbReference>
<dbReference type="PIRSF" id="PIRSF006643">
    <property type="entry name" value="NDUA6"/>
    <property type="match status" value="1"/>
</dbReference>
<comment type="function">
    <text evidence="1">Accessory subunit of the mitochondrial membrane respiratory chain NADH dehydrogenase (Complex I), that is believed to be not involved in catalysis. Required for proper complex I assembly. Complex I functions in the transfer of electrons from NADH to the respiratory chain. The immediate electron acceptor for the enzyme is believed to be ubiquinone.</text>
</comment>
<comment type="subunit">
    <text evidence="1">Mammalian complex I is composed of 45 different subunits.</text>
</comment>
<comment type="subcellular location">
    <subcellularLocation>
        <location evidence="1">Mitochondrion inner membrane</location>
        <topology evidence="1">Peripheral membrane protein</topology>
        <orientation evidence="1">Matrix side</orientation>
    </subcellularLocation>
</comment>
<comment type="similarity">
    <text evidence="3">Belongs to the complex I LYR family.</text>
</comment>
<organism>
    <name type="scientific">Pan troglodytes</name>
    <name type="common">Chimpanzee</name>
    <dbReference type="NCBI Taxonomy" id="9598"/>
    <lineage>
        <taxon>Eukaryota</taxon>
        <taxon>Metazoa</taxon>
        <taxon>Chordata</taxon>
        <taxon>Craniata</taxon>
        <taxon>Vertebrata</taxon>
        <taxon>Euteleostomi</taxon>
        <taxon>Mammalia</taxon>
        <taxon>Eutheria</taxon>
        <taxon>Euarchontoglires</taxon>
        <taxon>Primates</taxon>
        <taxon>Haplorrhini</taxon>
        <taxon>Catarrhini</taxon>
        <taxon>Hominidae</taxon>
        <taxon>Pan</taxon>
    </lineage>
</organism>
<protein>
    <recommendedName>
        <fullName evidence="1">NADH dehydrogenase [ubiquinone] 1 alpha subcomplex subunit 6</fullName>
    </recommendedName>
    <alternativeName>
        <fullName>Complex I-B14</fullName>
        <shortName>CI-B14</shortName>
    </alternativeName>
    <alternativeName>
        <fullName>NADH-ubiquinone oxidoreductase B14 subunit</fullName>
    </alternativeName>
</protein>
<keyword id="KW-0007">Acetylation</keyword>
<keyword id="KW-0249">Electron transport</keyword>
<keyword id="KW-0472">Membrane</keyword>
<keyword id="KW-0496">Mitochondrion</keyword>
<keyword id="KW-0999">Mitochondrion inner membrane</keyword>
<keyword id="KW-0597">Phosphoprotein</keyword>
<keyword id="KW-1185">Reference proteome</keyword>
<keyword id="KW-0679">Respiratory chain</keyword>
<keyword id="KW-0813">Transport</keyword>
<proteinExistence type="evidence at transcript level"/>
<sequence>MAGSGVRQATSTASTFVKPIFSRDMNEAKRRVRELYRAWYREVPNTVHQFQLDITVKMGRDKVREMFMKNAHVTDPRVVDLLVIKGKIELEETIKVWKQRTHVMRFFHETEAPRPKDFLSKFYVGHDP</sequence>
<accession>Q0MQA5</accession>
<evidence type="ECO:0000250" key="1">
    <source>
        <dbReference type="UniProtKB" id="P56556"/>
    </source>
</evidence>
<evidence type="ECO:0000250" key="2">
    <source>
        <dbReference type="UniProtKB" id="Q02366"/>
    </source>
</evidence>
<evidence type="ECO:0000305" key="3"/>
<reference key="1">
    <citation type="journal article" date="2006" name="Gene">
        <title>Adaptive selection of mitochondrial complex I subunits during primate radiation.</title>
        <authorList>
            <person name="Mishmar D."/>
            <person name="Ruiz-Pesini E."/>
            <person name="Mondragon-Palomino M."/>
            <person name="Procaccio V."/>
            <person name="Gaut B."/>
            <person name="Wallace D.C."/>
        </authorList>
    </citation>
    <scope>NUCLEOTIDE SEQUENCE [MRNA]</scope>
</reference>
<gene>
    <name evidence="1" type="primary">NDUFA6</name>
</gene>